<name>RS8_SODGM</name>
<organism>
    <name type="scientific">Sodalis glossinidius (strain morsitans)</name>
    <dbReference type="NCBI Taxonomy" id="343509"/>
    <lineage>
        <taxon>Bacteria</taxon>
        <taxon>Pseudomonadati</taxon>
        <taxon>Pseudomonadota</taxon>
        <taxon>Gammaproteobacteria</taxon>
        <taxon>Enterobacterales</taxon>
        <taxon>Bruguierivoracaceae</taxon>
        <taxon>Sodalis</taxon>
    </lineage>
</organism>
<gene>
    <name evidence="1" type="primary">rpsH</name>
    <name type="ordered locus">SG2264</name>
</gene>
<reference key="1">
    <citation type="journal article" date="2006" name="Genome Res.">
        <title>Massive genome erosion and functional adaptations provide insights into the symbiotic lifestyle of Sodalis glossinidius in the tsetse host.</title>
        <authorList>
            <person name="Toh H."/>
            <person name="Weiss B.L."/>
            <person name="Perkin S.A.H."/>
            <person name="Yamashita A."/>
            <person name="Oshima K."/>
            <person name="Hattori M."/>
            <person name="Aksoy S."/>
        </authorList>
    </citation>
    <scope>NUCLEOTIDE SEQUENCE [LARGE SCALE GENOMIC DNA]</scope>
    <source>
        <strain>morsitans</strain>
    </source>
</reference>
<evidence type="ECO:0000255" key="1">
    <source>
        <dbReference type="HAMAP-Rule" id="MF_01302"/>
    </source>
</evidence>
<evidence type="ECO:0000305" key="2"/>
<sequence length="130" mass="14143">MSMQDPIADMLTRIRNGQAANKTAVSMPSSKLKVAIANLLKEEGFIEDYKVEGDTKPTLELVLKYFQGKPVVETIQRISRPGLRIYKKKDALPKVMAGMGIAVISTSKGVMTDRAARQAGLGGEIICYVA</sequence>
<keyword id="KW-0687">Ribonucleoprotein</keyword>
<keyword id="KW-0689">Ribosomal protein</keyword>
<keyword id="KW-0694">RNA-binding</keyword>
<keyword id="KW-0699">rRNA-binding</keyword>
<dbReference type="EMBL" id="AP008232">
    <property type="protein sequence ID" value="BAE75539.1"/>
    <property type="molecule type" value="Genomic_DNA"/>
</dbReference>
<dbReference type="RefSeq" id="WP_011412074.1">
    <property type="nucleotide sequence ID" value="NC_007712.1"/>
</dbReference>
<dbReference type="SMR" id="Q2NQN6"/>
<dbReference type="STRING" id="343509.SG2264"/>
<dbReference type="KEGG" id="sgl:SG2264"/>
<dbReference type="eggNOG" id="COG0096">
    <property type="taxonomic scope" value="Bacteria"/>
</dbReference>
<dbReference type="HOGENOM" id="CLU_098428_0_0_6"/>
<dbReference type="OrthoDB" id="9802617at2"/>
<dbReference type="Proteomes" id="UP000001932">
    <property type="component" value="Chromosome"/>
</dbReference>
<dbReference type="GO" id="GO:1990904">
    <property type="term" value="C:ribonucleoprotein complex"/>
    <property type="evidence" value="ECO:0007669"/>
    <property type="project" value="UniProtKB-KW"/>
</dbReference>
<dbReference type="GO" id="GO:0005840">
    <property type="term" value="C:ribosome"/>
    <property type="evidence" value="ECO:0007669"/>
    <property type="project" value="UniProtKB-KW"/>
</dbReference>
<dbReference type="GO" id="GO:0019843">
    <property type="term" value="F:rRNA binding"/>
    <property type="evidence" value="ECO:0007669"/>
    <property type="project" value="UniProtKB-UniRule"/>
</dbReference>
<dbReference type="GO" id="GO:0003735">
    <property type="term" value="F:structural constituent of ribosome"/>
    <property type="evidence" value="ECO:0007669"/>
    <property type="project" value="InterPro"/>
</dbReference>
<dbReference type="GO" id="GO:0006412">
    <property type="term" value="P:translation"/>
    <property type="evidence" value="ECO:0007669"/>
    <property type="project" value="UniProtKB-UniRule"/>
</dbReference>
<dbReference type="FunFam" id="3.30.1370.30:FF:000003">
    <property type="entry name" value="30S ribosomal protein S8"/>
    <property type="match status" value="1"/>
</dbReference>
<dbReference type="FunFam" id="3.30.1490.10:FF:000001">
    <property type="entry name" value="30S ribosomal protein S8"/>
    <property type="match status" value="1"/>
</dbReference>
<dbReference type="Gene3D" id="3.30.1370.30">
    <property type="match status" value="1"/>
</dbReference>
<dbReference type="Gene3D" id="3.30.1490.10">
    <property type="match status" value="1"/>
</dbReference>
<dbReference type="HAMAP" id="MF_01302_B">
    <property type="entry name" value="Ribosomal_uS8_B"/>
    <property type="match status" value="1"/>
</dbReference>
<dbReference type="InterPro" id="IPR000630">
    <property type="entry name" value="Ribosomal_uS8"/>
</dbReference>
<dbReference type="InterPro" id="IPR047863">
    <property type="entry name" value="Ribosomal_uS8_CS"/>
</dbReference>
<dbReference type="InterPro" id="IPR035987">
    <property type="entry name" value="Ribosomal_uS8_sf"/>
</dbReference>
<dbReference type="NCBIfam" id="NF001109">
    <property type="entry name" value="PRK00136.1"/>
    <property type="match status" value="1"/>
</dbReference>
<dbReference type="PANTHER" id="PTHR11758">
    <property type="entry name" value="40S RIBOSOMAL PROTEIN S15A"/>
    <property type="match status" value="1"/>
</dbReference>
<dbReference type="Pfam" id="PF00410">
    <property type="entry name" value="Ribosomal_S8"/>
    <property type="match status" value="1"/>
</dbReference>
<dbReference type="SUPFAM" id="SSF56047">
    <property type="entry name" value="Ribosomal protein S8"/>
    <property type="match status" value="1"/>
</dbReference>
<dbReference type="PROSITE" id="PS00053">
    <property type="entry name" value="RIBOSOMAL_S8"/>
    <property type="match status" value="1"/>
</dbReference>
<feature type="chain" id="PRO_0000290935" description="Small ribosomal subunit protein uS8">
    <location>
        <begin position="1"/>
        <end position="130"/>
    </location>
</feature>
<accession>Q2NQN6</accession>
<protein>
    <recommendedName>
        <fullName evidence="1">Small ribosomal subunit protein uS8</fullName>
    </recommendedName>
    <alternativeName>
        <fullName evidence="2">30S ribosomal protein S8</fullName>
    </alternativeName>
</protein>
<comment type="function">
    <text evidence="1">One of the primary rRNA binding proteins, it binds directly to 16S rRNA central domain where it helps coordinate assembly of the platform of the 30S subunit.</text>
</comment>
<comment type="subunit">
    <text evidence="1">Part of the 30S ribosomal subunit. Contacts proteins S5 and S12.</text>
</comment>
<comment type="similarity">
    <text evidence="1">Belongs to the universal ribosomal protein uS8 family.</text>
</comment>
<proteinExistence type="inferred from homology"/>